<evidence type="ECO:0000255" key="1">
    <source>
        <dbReference type="HAMAP-Rule" id="MF_00581"/>
    </source>
</evidence>
<sequence length="447" mass="49946">MTTILKHLPVGQRIGIAFSGGLDTSAALLWMRQKGAVPYAYTANLGQPDEEDYDAIPRRAMEYGAENARLIDCRKQLVAEGIAAIQCGAFHNTTGGLTYFNTTPLGRAVTGTMLVAAMKEDGVNIWGDGSTYKGNDIERFYRYGLLTNAELQIYKPWLDTDFIDELGGRHEMSEFMIACGFDYKMSVEKAYSTDSNMLGATHEAKDLEYLNSSVKIVNPIMGVKFWDESVKIPAEEVTVRFEQGHPVALNGKTFSDDVEMMLEANRIGGRHGLGMSDQIENRIIEAKSRGIYEAPGMALLHIAYERLLTGIHNEDTIEQYHAHGRQLGRLLYQGRWFDSQALMLRDSLQRWVASQITGEVTLELRRGNDYSILNTVSENLTYKPERLTMEKGDSVFSPDDRIGQLTMRNLDITDTREKLFGYAKTGLLSSSATSGVPQVENMENKGQ</sequence>
<feature type="chain" id="PRO_1000061195" description="Argininosuccinate synthase">
    <location>
        <begin position="1"/>
        <end position="447"/>
    </location>
</feature>
<feature type="binding site" evidence="1">
    <location>
        <begin position="17"/>
        <end position="25"/>
    </location>
    <ligand>
        <name>ATP</name>
        <dbReference type="ChEBI" id="CHEBI:30616"/>
    </ligand>
</feature>
<feature type="binding site" evidence="1">
    <location>
        <position position="43"/>
    </location>
    <ligand>
        <name>ATP</name>
        <dbReference type="ChEBI" id="CHEBI:30616"/>
    </ligand>
</feature>
<feature type="binding site" evidence="1">
    <location>
        <position position="99"/>
    </location>
    <ligand>
        <name>L-citrulline</name>
        <dbReference type="ChEBI" id="CHEBI:57743"/>
    </ligand>
</feature>
<feature type="binding site" evidence="1">
    <location>
        <position position="129"/>
    </location>
    <ligand>
        <name>ATP</name>
        <dbReference type="ChEBI" id="CHEBI:30616"/>
    </ligand>
</feature>
<feature type="binding site" evidence="1">
    <location>
        <position position="131"/>
    </location>
    <ligand>
        <name>ATP</name>
        <dbReference type="ChEBI" id="CHEBI:30616"/>
    </ligand>
</feature>
<feature type="binding site" evidence="1">
    <location>
        <position position="131"/>
    </location>
    <ligand>
        <name>L-aspartate</name>
        <dbReference type="ChEBI" id="CHEBI:29991"/>
    </ligand>
</feature>
<feature type="binding site" evidence="1">
    <location>
        <position position="135"/>
    </location>
    <ligand>
        <name>L-aspartate</name>
        <dbReference type="ChEBI" id="CHEBI:29991"/>
    </ligand>
</feature>
<feature type="binding site" evidence="1">
    <location>
        <position position="135"/>
    </location>
    <ligand>
        <name>L-citrulline</name>
        <dbReference type="ChEBI" id="CHEBI:57743"/>
    </ligand>
</feature>
<feature type="binding site" evidence="1">
    <location>
        <position position="136"/>
    </location>
    <ligand>
        <name>ATP</name>
        <dbReference type="ChEBI" id="CHEBI:30616"/>
    </ligand>
</feature>
<feature type="binding site" evidence="1">
    <location>
        <position position="136"/>
    </location>
    <ligand>
        <name>L-aspartate</name>
        <dbReference type="ChEBI" id="CHEBI:29991"/>
    </ligand>
</feature>
<feature type="binding site" evidence="1">
    <location>
        <position position="139"/>
    </location>
    <ligand>
        <name>L-citrulline</name>
        <dbReference type="ChEBI" id="CHEBI:57743"/>
    </ligand>
</feature>
<feature type="binding site" evidence="1">
    <location>
        <position position="192"/>
    </location>
    <ligand>
        <name>L-citrulline</name>
        <dbReference type="ChEBI" id="CHEBI:57743"/>
    </ligand>
</feature>
<feature type="binding site" evidence="1">
    <location>
        <position position="194"/>
    </location>
    <ligand>
        <name>ATP</name>
        <dbReference type="ChEBI" id="CHEBI:30616"/>
    </ligand>
</feature>
<feature type="binding site" evidence="1">
    <location>
        <position position="201"/>
    </location>
    <ligand>
        <name>L-citrulline</name>
        <dbReference type="ChEBI" id="CHEBI:57743"/>
    </ligand>
</feature>
<feature type="binding site" evidence="1">
    <location>
        <position position="203"/>
    </location>
    <ligand>
        <name>L-citrulline</name>
        <dbReference type="ChEBI" id="CHEBI:57743"/>
    </ligand>
</feature>
<feature type="binding site" evidence="1">
    <location>
        <position position="280"/>
    </location>
    <ligand>
        <name>L-citrulline</name>
        <dbReference type="ChEBI" id="CHEBI:57743"/>
    </ligand>
</feature>
<organism>
    <name type="scientific">Escherichia coli O139:H28 (strain E24377A / ETEC)</name>
    <dbReference type="NCBI Taxonomy" id="331111"/>
    <lineage>
        <taxon>Bacteria</taxon>
        <taxon>Pseudomonadati</taxon>
        <taxon>Pseudomonadota</taxon>
        <taxon>Gammaproteobacteria</taxon>
        <taxon>Enterobacterales</taxon>
        <taxon>Enterobacteriaceae</taxon>
        <taxon>Escherichia</taxon>
    </lineage>
</organism>
<protein>
    <recommendedName>
        <fullName evidence="1">Argininosuccinate synthase</fullName>
        <ecNumber evidence="1">6.3.4.5</ecNumber>
    </recommendedName>
    <alternativeName>
        <fullName evidence="1">Citrulline--aspartate ligase</fullName>
    </alternativeName>
</protein>
<keyword id="KW-0028">Amino-acid biosynthesis</keyword>
<keyword id="KW-0055">Arginine biosynthesis</keyword>
<keyword id="KW-0067">ATP-binding</keyword>
<keyword id="KW-0963">Cytoplasm</keyword>
<keyword id="KW-0436">Ligase</keyword>
<keyword id="KW-0547">Nucleotide-binding</keyword>
<keyword id="KW-1185">Reference proteome</keyword>
<reference key="1">
    <citation type="journal article" date="2008" name="J. Bacteriol.">
        <title>The pangenome structure of Escherichia coli: comparative genomic analysis of E. coli commensal and pathogenic isolates.</title>
        <authorList>
            <person name="Rasko D.A."/>
            <person name="Rosovitz M.J."/>
            <person name="Myers G.S.A."/>
            <person name="Mongodin E.F."/>
            <person name="Fricke W.F."/>
            <person name="Gajer P."/>
            <person name="Crabtree J."/>
            <person name="Sebaihia M."/>
            <person name="Thomson N.R."/>
            <person name="Chaudhuri R."/>
            <person name="Henderson I.R."/>
            <person name="Sperandio V."/>
            <person name="Ravel J."/>
        </authorList>
    </citation>
    <scope>NUCLEOTIDE SEQUENCE [LARGE SCALE GENOMIC DNA]</scope>
    <source>
        <strain>E24377A / ETEC</strain>
    </source>
</reference>
<name>ASSY_ECO24</name>
<gene>
    <name evidence="1" type="primary">argG</name>
    <name type="ordered locus">EcE24377A_3657</name>
</gene>
<dbReference type="EC" id="6.3.4.5" evidence="1"/>
<dbReference type="EMBL" id="CP000800">
    <property type="protein sequence ID" value="ABV17704.1"/>
    <property type="molecule type" value="Genomic_DNA"/>
</dbReference>
<dbReference type="RefSeq" id="WP_000207685.1">
    <property type="nucleotide sequence ID" value="NC_009801.1"/>
</dbReference>
<dbReference type="SMR" id="A7ZS69"/>
<dbReference type="GeneID" id="75206028"/>
<dbReference type="KEGG" id="ecw:EcE24377A_3657"/>
<dbReference type="HOGENOM" id="CLU_032784_4_1_6"/>
<dbReference type="UniPathway" id="UPA00068">
    <property type="reaction ID" value="UER00113"/>
</dbReference>
<dbReference type="Proteomes" id="UP000001122">
    <property type="component" value="Chromosome"/>
</dbReference>
<dbReference type="GO" id="GO:0005737">
    <property type="term" value="C:cytoplasm"/>
    <property type="evidence" value="ECO:0007669"/>
    <property type="project" value="UniProtKB-SubCell"/>
</dbReference>
<dbReference type="GO" id="GO:0004055">
    <property type="term" value="F:argininosuccinate synthase activity"/>
    <property type="evidence" value="ECO:0007669"/>
    <property type="project" value="UniProtKB-UniRule"/>
</dbReference>
<dbReference type="GO" id="GO:0005524">
    <property type="term" value="F:ATP binding"/>
    <property type="evidence" value="ECO:0007669"/>
    <property type="project" value="UniProtKB-UniRule"/>
</dbReference>
<dbReference type="GO" id="GO:0042803">
    <property type="term" value="F:protein homodimerization activity"/>
    <property type="evidence" value="ECO:0007669"/>
    <property type="project" value="InterPro"/>
</dbReference>
<dbReference type="GO" id="GO:0000053">
    <property type="term" value="P:argininosuccinate metabolic process"/>
    <property type="evidence" value="ECO:0007669"/>
    <property type="project" value="TreeGrafter"/>
</dbReference>
<dbReference type="GO" id="GO:0006526">
    <property type="term" value="P:L-arginine biosynthetic process"/>
    <property type="evidence" value="ECO:0007669"/>
    <property type="project" value="UniProtKB-UniRule"/>
</dbReference>
<dbReference type="GO" id="GO:0000050">
    <property type="term" value="P:urea cycle"/>
    <property type="evidence" value="ECO:0007669"/>
    <property type="project" value="TreeGrafter"/>
</dbReference>
<dbReference type="CDD" id="cd01999">
    <property type="entry name" value="ASS"/>
    <property type="match status" value="1"/>
</dbReference>
<dbReference type="FunFam" id="1.10.287.400:FF:000001">
    <property type="entry name" value="Argininosuccinate synthase"/>
    <property type="match status" value="1"/>
</dbReference>
<dbReference type="Gene3D" id="1.10.287.400">
    <property type="match status" value="1"/>
</dbReference>
<dbReference type="Gene3D" id="3.90.1260.10">
    <property type="entry name" value="Argininosuccinate synthetase, chain A, domain 2"/>
    <property type="match status" value="1"/>
</dbReference>
<dbReference type="Gene3D" id="3.40.50.620">
    <property type="entry name" value="HUPs"/>
    <property type="match status" value="1"/>
</dbReference>
<dbReference type="HAMAP" id="MF_00581">
    <property type="entry name" value="Arg_succ_synth_type2"/>
    <property type="match status" value="1"/>
</dbReference>
<dbReference type="InterPro" id="IPR023437">
    <property type="entry name" value="Arg_succ_synth_type2_subfam"/>
</dbReference>
<dbReference type="InterPro" id="IPR048268">
    <property type="entry name" value="Arginosuc_syn_C"/>
</dbReference>
<dbReference type="InterPro" id="IPR048267">
    <property type="entry name" value="Arginosuc_syn_N"/>
</dbReference>
<dbReference type="InterPro" id="IPR001518">
    <property type="entry name" value="Arginosuc_synth"/>
</dbReference>
<dbReference type="InterPro" id="IPR018223">
    <property type="entry name" value="Arginosuc_synth_CS"/>
</dbReference>
<dbReference type="InterPro" id="IPR023434">
    <property type="entry name" value="Arginosuc_synth_type_1_subfam"/>
</dbReference>
<dbReference type="InterPro" id="IPR024074">
    <property type="entry name" value="AS_cat/multimer_dom_body"/>
</dbReference>
<dbReference type="InterPro" id="IPR024073">
    <property type="entry name" value="AS_multimer_C_tail"/>
</dbReference>
<dbReference type="InterPro" id="IPR014729">
    <property type="entry name" value="Rossmann-like_a/b/a_fold"/>
</dbReference>
<dbReference type="NCBIfam" id="TIGR00032">
    <property type="entry name" value="argG"/>
    <property type="match status" value="1"/>
</dbReference>
<dbReference type="NCBIfam" id="NF003779">
    <property type="entry name" value="PRK05370.1"/>
    <property type="match status" value="1"/>
</dbReference>
<dbReference type="PANTHER" id="PTHR11587">
    <property type="entry name" value="ARGININOSUCCINATE SYNTHASE"/>
    <property type="match status" value="1"/>
</dbReference>
<dbReference type="PANTHER" id="PTHR11587:SF2">
    <property type="entry name" value="ARGININOSUCCINATE SYNTHASE"/>
    <property type="match status" value="1"/>
</dbReference>
<dbReference type="Pfam" id="PF20979">
    <property type="entry name" value="Arginosuc_syn_C"/>
    <property type="match status" value="1"/>
</dbReference>
<dbReference type="Pfam" id="PF00764">
    <property type="entry name" value="Arginosuc_synth"/>
    <property type="match status" value="1"/>
</dbReference>
<dbReference type="SUPFAM" id="SSF52402">
    <property type="entry name" value="Adenine nucleotide alpha hydrolases-like"/>
    <property type="match status" value="1"/>
</dbReference>
<dbReference type="SUPFAM" id="SSF69864">
    <property type="entry name" value="Argininosuccinate synthetase, C-terminal domain"/>
    <property type="match status" value="1"/>
</dbReference>
<dbReference type="PROSITE" id="PS00564">
    <property type="entry name" value="ARGININOSUCCIN_SYN_1"/>
    <property type="match status" value="1"/>
</dbReference>
<dbReference type="PROSITE" id="PS00565">
    <property type="entry name" value="ARGININOSUCCIN_SYN_2"/>
    <property type="match status" value="1"/>
</dbReference>
<accession>A7ZS69</accession>
<comment type="catalytic activity">
    <reaction evidence="1">
        <text>L-citrulline + L-aspartate + ATP = 2-(N(omega)-L-arginino)succinate + AMP + diphosphate + H(+)</text>
        <dbReference type="Rhea" id="RHEA:10932"/>
        <dbReference type="ChEBI" id="CHEBI:15378"/>
        <dbReference type="ChEBI" id="CHEBI:29991"/>
        <dbReference type="ChEBI" id="CHEBI:30616"/>
        <dbReference type="ChEBI" id="CHEBI:33019"/>
        <dbReference type="ChEBI" id="CHEBI:57472"/>
        <dbReference type="ChEBI" id="CHEBI:57743"/>
        <dbReference type="ChEBI" id="CHEBI:456215"/>
        <dbReference type="EC" id="6.3.4.5"/>
    </reaction>
</comment>
<comment type="pathway">
    <text evidence="1">Amino-acid biosynthesis; L-arginine biosynthesis; L-arginine from L-ornithine and carbamoyl phosphate: step 2/3.</text>
</comment>
<comment type="subunit">
    <text evidence="1">Homotetramer.</text>
</comment>
<comment type="subcellular location">
    <subcellularLocation>
        <location evidence="1">Cytoplasm</location>
    </subcellularLocation>
</comment>
<comment type="similarity">
    <text evidence="1">Belongs to the argininosuccinate synthase family. Type 2 subfamily.</text>
</comment>
<proteinExistence type="inferred from homology"/>